<protein>
    <recommendedName>
        <fullName>Cryptochrome-2</fullName>
    </recommendedName>
</protein>
<comment type="function">
    <text evidence="5 12 15 17 21 22 27 28 29 31 36 37">Transcriptional repressor which forms a core component of the circadian clock. The circadian clock, an internal time-keeping system, regulates various physiological processes through the generation of approximately 24 hour circadian rhythms in gene expression, which are translated into rhythms in metabolism and behavior. It is derived from the Latin roots 'circa' (about) and 'diem' (day) and acts as an important regulator of a wide array of physiological functions including metabolism, sleep, body temperature, blood pressure, endocrine, immune, cardiovascular, and renal function. Consists of two major components: the central clock, residing in the suprachiasmatic nucleus (SCN) of the brain, and the peripheral clocks that are present in nearly every tissue and organ system. Both the central and peripheral clocks can be reset by environmental cues, also known as Zeitgebers (German for 'timegivers'). The predominant Zeitgeber for the central clock is light, which is sensed by retina and signals directly to the SCN. The central clock entrains the peripheral clocks through neuronal and hormonal signals, body temperature and feeding-related cues, aligning all clocks with the external light/dark cycle. Circadian rhythms allow an organism to achieve temporal homeostasis with its environment at the molecular level by regulating gene expression to create a peak of protein expression once every 24 hours to control when a particular physiological process is most active with respect to the solar day. Transcription and translation of core clock components (CLOCK, NPAS2, BMAL1, BMAL2, PER1, PER2, PER3, CRY1 and CRY2) plays a critical role in rhythm generation, whereas delays imposed by post-translational modifications (PTMs) are important for determining the period (tau) of the rhythms (tau refers to the period of a rhythm and is the length, in time, of one complete cycle). A diurnal rhythm is synchronized with the day/night cycle, while the ultradian and infradian rhythms have a period shorter and longer than 24 hours, respectively. Disruptions in the circadian rhythms contribute to the pathology of cardiovascular diseases, cancer, metabolic syndromes and aging. A transcription/translation feedback loop (TTFL) forms the core of the molecular circadian clock mechanism. Transcription factors, CLOCK or NPAS2 and BMAL1 or BMAL2, form the positive limb of the feedback loop, act in the form of a heterodimer and activate the transcription of core clock genes and clock-controlled genes (involved in key metabolic processes), harboring E-box elements (5'-CACGTG-3') within their promoters. The core clock genes: PER1/2/3 and CRY1/2 which are transcriptional repressors form the negative limb of the feedback loop and interact with the CLOCK|NPAS2-BMAL1|BMAL2 heterodimer inhibiting its activity and thereby negatively regulating their own expression. This heterodimer also activates nuclear receptors NR1D1/2 and RORA/B/G, which form a second feedback loop and which activate and repress BMAL1 transcription, respectively. CRY1 and CRY2 have redundant functions but also differential and selective contributions at least in defining the pace of the SCN circadian clock and its circadian transcriptional outputs. Less potent transcriptional repressor in cerebellum and liver than CRY1, though less effective in lengthening the period of the SCN oscillator. Seems to play a critical role in tuning SCN circadian period by opposing the action of CRY1. With CRY1, dispensable for circadian rhythm generation but necessary for the development of intercellular networks for rhythm synchrony. May mediate circadian regulation of cAMP signaling and gluconeogenesis by blocking glucagon-mediated increases in intracellular cAMP concentrations and in CREB1 phosphorylation. Besides its role in the maintenance of the circadian clock, is also involved in the regulation of other processes. Plays a key role in glucose and lipid metabolism modulation, in part, through the transcriptional regulation of genes involved in these pathways, such as LEP or ACSL4. Represses glucocorticoid receptor NR3C1/GR-induced transcriptional activity by binding to glucocorticoid response elements (GREs). Represses the CLOCK-BMAL1 induced transcription of BHLHE40/DEC1 and NAMPT. Represses PPARD and its target genes in the skeletal muscle and limits exercise capacity (PubMed:28683290). Represses the transcriptional activity of NR1I2 (PubMed:28751364).</text>
</comment>
<comment type="cofactor">
    <cofactor evidence="26">
        <name>FAD</name>
        <dbReference type="ChEBI" id="CHEBI:57692"/>
    </cofactor>
    <text evidence="26">Binds 1 FAD per subunit. Only a minority of the protein molecules contain bound FAD. Contrary to the situation in photolyases, the FAD is bound in a shallow, surface-exposed pocket.</text>
</comment>
<comment type="cofactor">
    <cofactor evidence="1">
        <name>(6R)-5,10-methylene-5,6,7,8-tetrahydrofolate</name>
        <dbReference type="ChEBI" id="CHEBI:15636"/>
    </cofactor>
    <text evidence="1">Binds 1 5,10-methenyltetrahydrofolate (MTHF) non-covalently per subunit.</text>
</comment>
<comment type="activity regulation">
    <text evidence="23">KL001 (N-[3-(9H-carbazol-9-yl)-2-hydroxypropyl]-N-(2-furanylmethyl)-methanesulfonamide) binds to CRY1 and stabilizes it by inhibiting FBXL3- and ubiquitin-dependent degradation of CRY1 resulting in lengthening of the circadian periods. KL001-mediated CRY1 stabilization can inhibit glucagon-induced gluconeogenesis in primary hepatocytes.</text>
</comment>
<comment type="subunit">
    <text evidence="3 5 7 8 9 12 13 14 16 18 20 22 24 25 26 30 31 32 33 35 36 37">Component of the circadian core oscillator, which includes the CRY proteins, CLOCK or NPAS2, BMAL1 or BMAL2, CSNK1D and/or CSNK1E, TIMELESS, and the PER proteins (PubMed:11779462). Interacts with TIMELESS (PubMed:10428031). Interacts directly with PER1, PER2 and PER3; interaction with PER2 inhibits its ubiquitination and vice versa (PubMed:10428031, PubMed:11875063, PubMed:14701732, PubMed:20840750, PubMed:24154698). Interacts with CLOCK-BMAL1 (PubMed:16628007). Interacts with BMAL1 (PubMed:16717091, PubMed:19917250, PubMed:20840750). Interacts with CLOCK (PubMed:16717091, PubMed:19917250). Interacts with NFIL3 (PubMed:17274955). Interacts with FBXL3 and FBXL21 (PubMed:17462724, PubMed:23452855, PubMed:23452856). FBXL3, PER2 and the cofactor FAD compete for overlapping binding sites (PubMed:23503662, PubMed:24080726). FBXL3 cannot bind CRY2 that interacts already with PER2 or that contains bound FAD (PubMed:23503662). Interacts with PPP5C (via TPR repeats); the interaction down-regulates the PPP5C phosphatase activity on CSNK1E (By similarity). Interacts with nuclear receptors AR and NR3C1/GR; the interaction is ligand dependent (PubMed:22170608, PubMed:28751364). Interacts with PRKDC (PubMed:24158435). Interacts with CIART (PubMed:24736997). Interacts with DDB1, USP7 and TARDBP (PubMed:27123980). Interacts with HNF4A (PubMed:28751364). Interacts with PPARA (PubMed:28683290). Interacts with PPARG in a ligand-dependent manner (PubMed:28683290). Interacts with PPARD (via domain NR LBD) in a ligand-dependent manner (PubMed:28683290, PubMed:28751364). Interacts with NR1I2 (via domain NR LBD) in a ligand-dependent manner (PubMed:28751364). Interacts with NR1I3 and VDR in a ligand-dependent manner (PubMed:28751364).</text>
</comment>
<comment type="interaction">
    <interactant intactId="EBI-1266619">
        <id>Q9R194</id>
    </interactant>
    <interactant intactId="EBI-644534">
        <id>Q9WTL8</id>
        <label>Bmal1</label>
    </interactant>
    <organismsDiffer>false</organismsDiffer>
    <experiments>12</experiments>
</comment>
<comment type="interaction">
    <interactant intactId="EBI-1266619">
        <id>Q9R194</id>
    </interactant>
    <interactant intactId="EBI-16101489">
        <id>Q3TQ03</id>
        <label>Ciart</label>
    </interactant>
    <organismsDiffer>false</organismsDiffer>
    <experiments>2</experiments>
</comment>
<comment type="interaction">
    <interactant intactId="EBI-1266619">
        <id>Q9R194</id>
    </interactant>
    <interactant intactId="EBI-348179">
        <id>P67871</id>
        <label>Csnk2b</label>
    </interactant>
    <organismsDiffer>false</organismsDiffer>
    <experiments>3</experiments>
</comment>
<comment type="interaction">
    <interactant intactId="EBI-1266619">
        <id>Q9R194</id>
    </interactant>
    <interactant intactId="EBI-6898235">
        <id>Q8BFZ4</id>
        <label>Fbxl21</label>
    </interactant>
    <organismsDiffer>false</organismsDiffer>
    <experiments>4</experiments>
</comment>
<comment type="interaction">
    <interactant intactId="EBI-1266619">
        <id>Q9R194</id>
    </interactant>
    <interactant intactId="EBI-1266589">
        <id>Q8C4V4</id>
        <label>Fbxl3</label>
    </interactant>
    <organismsDiffer>false</organismsDiffer>
    <experiments>6</experiments>
</comment>
<comment type="interaction">
    <interactant intactId="EBI-1266619">
        <id>Q9R194</id>
    </interactant>
    <interactant intactId="EBI-15959147">
        <id>P06537-1</id>
        <label>Nr3c1</label>
    </interactant>
    <organismsDiffer>false</organismsDiffer>
    <experiments>3</experiments>
</comment>
<comment type="interaction">
    <interactant intactId="EBI-1266619">
        <id>Q9R194</id>
    </interactant>
    <interactant intactId="EBI-1266764">
        <id>O35973</id>
        <label>Per1</label>
    </interactant>
    <organismsDiffer>false</organismsDiffer>
    <experiments>3</experiments>
</comment>
<comment type="interaction">
    <interactant intactId="EBI-1266619">
        <id>Q9R194</id>
    </interactant>
    <interactant intactId="EBI-1266779">
        <id>O54943</id>
        <label>Per2</label>
    </interactant>
    <organismsDiffer>false</organismsDiffer>
    <experiments>8</experiments>
</comment>
<comment type="interaction">
    <interactant intactId="EBI-1266619">
        <id>Q9R194</id>
    </interactant>
    <interactant intactId="EBI-2557269">
        <id>Q9UKT7</id>
        <label>FBXL3</label>
    </interactant>
    <organismsDiffer>true</organismsDiffer>
    <experiments>13</experiments>
</comment>
<comment type="interaction">
    <interactant intactId="EBI-1266619">
        <id>Q9R194</id>
    </interactant>
    <interactant intactId="EBI-2557276">
        <id>O15534</id>
        <label>PER1</label>
    </interactant>
    <organismsDiffer>true</organismsDiffer>
    <experiments>3</experiments>
</comment>
<comment type="subcellular location">
    <subcellularLocation>
        <location evidence="7">Cytoplasm</location>
    </subcellularLocation>
    <subcellularLocation>
        <location evidence="7">Nucleus</location>
    </subcellularLocation>
    <text evidence="7">Translocated to the nucleus through interaction with other Clock proteins such as PER2 or BMAL1.</text>
</comment>
<comment type="tissue specificity">
    <text evidence="6 7 31 38 39">Expression in the retina is restricted to the photoreceptor layer (at protein level) (PubMed:29561690). Expressed in all tissues examined including heart, brain, spleen, lung, liver, skeletal muscle, kidney and testis. Weak expression in spleen.</text>
</comment>
<comment type="induction">
    <text evidence="5 6 18">Shows no clear circadian oscillation pattern in testis, cerebellum nor liver. In skeletal muscle, under constant darkness and 12 hours light:12 hours dark conditions, levels peak between ZT6 and ZT9.</text>
</comment>
<comment type="PTM">
    <text evidence="8 10 11 19">Phosphorylation on Ser-265 by MAPK is important for the inhibition of CLOCK-BMAL1-mediated transcriptional activity. Phosphorylation by CSKNE requires interaction with PER1 or PER2. Phosphorylated in a circadian manner at Ser-553 and Ser-557 in the suprachiasmatic nucleus (SCN) and liver. Phosphorylation at Ser-557 by DYRK1A promotes subsequent phosphorylation at Ser-553 by GSK3-beta: the two-step phosphorylation at the neighboring Ser residues leads to its proteasomal degradation.</text>
</comment>
<comment type="PTM">
    <text evidence="10 11 16 19 24 25 34 35">Ubiquitinated by the SCF(FBXL3) and SCF(FBXL21) complexes, regulating the balance between degradation and stabilization. The SCF(FBXL3) complex is mainly nuclear and mediates ubiquitination and subsequent degradation of CRY2. In contrast, cytoplasmic SCF(FBXL21) complex-mediated ubiquitination leads to stabilize CRY2 and counteract the activity of the SCF(FBXL3) complex. The SCF(FBXL3) and SCF(FBXL21) complexes probably mediate ubiquitination at different Lys residues. The SCF(FBXL3) complex recognizes and binds CRY2 phosphorylated at Ser-553 and Ser-557. Ubiquitination may be inhibited by PER2. Deubiquitinated by USP7 (PubMed:27123980).</text>
</comment>
<comment type="disruption phenotype">
    <text evidence="21 22 27 29 36 38">Animals show longer circadian periods. Double knockouts of CRY1 and CRY2 show slightly decrease body weight and lose the cycling rhythmicity of feeding behavior, energy expenditure and glucocorticorids expression. Glucose homeostasis is severely disrupted and animals exhibit elevated blood glucose in response to acute feeding after an overnight fast as well as severely impaired glucose clearance in a glucose tolerance test. When challenged with high-fat diet, animals rapidly gain weight and surpass that of wild-type mice, despite displaying hypophagia. They exhibit hyperinsulinemia and selective insulin resistance in the liver and muscle but show high insulin sensitivity in adipose tissue and consequent increased lipid uptake. Mice display enlarged gonadal, subcutaneous and perirenal fat deposits with adipocyte hypertrophy and increased lipied accumulation in liver. Mice show attentuated circadian rhythms in photopic ERG b-wave amplitudes (PubMed:29561690). Both single CRY1 knockout and double CRY1 and CRY2 knockout mice show increased exercise performance and increased mitochondrial reserve capacity in primary myotubes (PubMed:28683290).</text>
</comment>
<comment type="similarity">
    <text evidence="40">Belongs to the DNA photolyase class-1 family.</text>
</comment>
<gene>
    <name type="primary">Cry2</name>
    <name type="synonym">Kiaa0658</name>
</gene>
<proteinExistence type="evidence at protein level"/>
<organism>
    <name type="scientific">Mus musculus</name>
    <name type="common">Mouse</name>
    <dbReference type="NCBI Taxonomy" id="10090"/>
    <lineage>
        <taxon>Eukaryota</taxon>
        <taxon>Metazoa</taxon>
        <taxon>Chordata</taxon>
        <taxon>Craniata</taxon>
        <taxon>Vertebrata</taxon>
        <taxon>Euteleostomi</taxon>
        <taxon>Mammalia</taxon>
        <taxon>Eutheria</taxon>
        <taxon>Euarchontoglires</taxon>
        <taxon>Glires</taxon>
        <taxon>Rodentia</taxon>
        <taxon>Myomorpha</taxon>
        <taxon>Muroidea</taxon>
        <taxon>Muridae</taxon>
        <taxon>Murinae</taxon>
        <taxon>Mus</taxon>
        <taxon>Mus</taxon>
    </lineage>
</organism>
<keyword id="KW-0002">3D-structure</keyword>
<keyword id="KW-0090">Biological rhythms</keyword>
<keyword id="KW-0157">Chromophore</keyword>
<keyword id="KW-0963">Cytoplasm</keyword>
<keyword id="KW-0274">FAD</keyword>
<keyword id="KW-0285">Flavoprotein</keyword>
<keyword id="KW-1017">Isopeptide bond</keyword>
<keyword id="KW-0547">Nucleotide-binding</keyword>
<keyword id="KW-0539">Nucleus</keyword>
<keyword id="KW-0597">Phosphoprotein</keyword>
<keyword id="KW-0600">Photoreceptor protein</keyword>
<keyword id="KW-0675">Receptor</keyword>
<keyword id="KW-1185">Reference proteome</keyword>
<keyword id="KW-0678">Repressor</keyword>
<keyword id="KW-0716">Sensory transduction</keyword>
<keyword id="KW-0804">Transcription</keyword>
<keyword id="KW-0805">Transcription regulation</keyword>
<keyword id="KW-0832">Ubl conjugation</keyword>
<evidence type="ECO:0000250" key="1"/>
<evidence type="ECO:0000250" key="2">
    <source>
        <dbReference type="UniProtKB" id="P97784"/>
    </source>
</evidence>
<evidence type="ECO:0000250" key="3">
    <source>
        <dbReference type="UniProtKB" id="Q49AN0"/>
    </source>
</evidence>
<evidence type="ECO:0000256" key="4">
    <source>
        <dbReference type="SAM" id="MobiDB-lite"/>
    </source>
</evidence>
<evidence type="ECO:0000269" key="5">
    <source>
    </source>
</evidence>
<evidence type="ECO:0000269" key="6">
    <source>
    </source>
</evidence>
<evidence type="ECO:0000269" key="7">
    <source>
    </source>
</evidence>
<evidence type="ECO:0000269" key="8">
    <source>
    </source>
</evidence>
<evidence type="ECO:0000269" key="9">
    <source>
    </source>
</evidence>
<evidence type="ECO:0000269" key="10">
    <source>
    </source>
</evidence>
<evidence type="ECO:0000269" key="11">
    <source>
    </source>
</evidence>
<evidence type="ECO:0000269" key="12">
    <source>
    </source>
</evidence>
<evidence type="ECO:0000269" key="13">
    <source>
    </source>
</evidence>
<evidence type="ECO:0000269" key="14">
    <source>
    </source>
</evidence>
<evidence type="ECO:0000269" key="15">
    <source>
    </source>
</evidence>
<evidence type="ECO:0000269" key="16">
    <source>
    </source>
</evidence>
<evidence type="ECO:0000269" key="17">
    <source>
    </source>
</evidence>
<evidence type="ECO:0000269" key="18">
    <source>
    </source>
</evidence>
<evidence type="ECO:0000269" key="19">
    <source>
    </source>
</evidence>
<evidence type="ECO:0000269" key="20">
    <source>
    </source>
</evidence>
<evidence type="ECO:0000269" key="21">
    <source>
    </source>
</evidence>
<evidence type="ECO:0000269" key="22">
    <source>
    </source>
</evidence>
<evidence type="ECO:0000269" key="23">
    <source>
    </source>
</evidence>
<evidence type="ECO:0000269" key="24">
    <source>
    </source>
</evidence>
<evidence type="ECO:0000269" key="25">
    <source>
    </source>
</evidence>
<evidence type="ECO:0000269" key="26">
    <source>
    </source>
</evidence>
<evidence type="ECO:0000269" key="27">
    <source>
    </source>
</evidence>
<evidence type="ECO:0000269" key="28">
    <source>
    </source>
</evidence>
<evidence type="ECO:0000269" key="29">
    <source>
    </source>
</evidence>
<evidence type="ECO:0000269" key="30">
    <source>
    </source>
</evidence>
<evidence type="ECO:0000269" key="31">
    <source>
    </source>
</evidence>
<evidence type="ECO:0000269" key="32">
    <source>
    </source>
</evidence>
<evidence type="ECO:0000269" key="33">
    <source>
    </source>
</evidence>
<evidence type="ECO:0000269" key="34">
    <source>
    </source>
</evidence>
<evidence type="ECO:0000269" key="35">
    <source>
    </source>
</evidence>
<evidence type="ECO:0000269" key="36">
    <source>
    </source>
</evidence>
<evidence type="ECO:0000269" key="37">
    <source>
    </source>
</evidence>
<evidence type="ECO:0000269" key="38">
    <source>
    </source>
</evidence>
<evidence type="ECO:0000269" key="39">
    <source>
    </source>
</evidence>
<evidence type="ECO:0000305" key="40"/>
<evidence type="ECO:0007829" key="41">
    <source>
        <dbReference type="PDB" id="4I6E"/>
    </source>
</evidence>
<evidence type="ECO:0007829" key="42">
    <source>
        <dbReference type="PDB" id="4I6J"/>
    </source>
</evidence>
<evidence type="ECO:0007829" key="43">
    <source>
        <dbReference type="PDB" id="7V8Y"/>
    </source>
</evidence>
<reference key="1">
    <citation type="journal article" date="1999" name="Cell">
        <title>mCRY1 and mCRY2 are essential components of the negative limb of the circadian clock feedback loop.</title>
        <authorList>
            <person name="Kume K."/>
            <person name="Zylka M.J."/>
            <person name="Sriram S."/>
            <person name="Shearman L.P."/>
            <person name="Weaver D.R."/>
            <person name="Jin X."/>
            <person name="Maywood E.S."/>
            <person name="Hastings M.H."/>
            <person name="Reppert S.M."/>
        </authorList>
    </citation>
    <scope>NUCLEOTIDE SEQUENCE [MRNA]</scope>
    <scope>FUNCTION</scope>
    <scope>SUBCELLULAR LOCATION</scope>
    <scope>INDUCTION</scope>
    <scope>INTERACTION WITH PER1; PER2; PER3 AND TIMELESS</scope>
    <source>
        <strain>C57BL/6J</strain>
    </source>
</reference>
<reference key="2">
    <citation type="journal article" date="2005" name="Science">
        <title>The transcriptional landscape of the mammalian genome.</title>
        <authorList>
            <person name="Carninci P."/>
            <person name="Kasukawa T."/>
            <person name="Katayama S."/>
            <person name="Gough J."/>
            <person name="Frith M.C."/>
            <person name="Maeda N."/>
            <person name="Oyama R."/>
            <person name="Ravasi T."/>
            <person name="Lenhard B."/>
            <person name="Wells C."/>
            <person name="Kodzius R."/>
            <person name="Shimokawa K."/>
            <person name="Bajic V.B."/>
            <person name="Brenner S.E."/>
            <person name="Batalov S."/>
            <person name="Forrest A.R."/>
            <person name="Zavolan M."/>
            <person name="Davis M.J."/>
            <person name="Wilming L.G."/>
            <person name="Aidinis V."/>
            <person name="Allen J.E."/>
            <person name="Ambesi-Impiombato A."/>
            <person name="Apweiler R."/>
            <person name="Aturaliya R.N."/>
            <person name="Bailey T.L."/>
            <person name="Bansal M."/>
            <person name="Baxter L."/>
            <person name="Beisel K.W."/>
            <person name="Bersano T."/>
            <person name="Bono H."/>
            <person name="Chalk A.M."/>
            <person name="Chiu K.P."/>
            <person name="Choudhary V."/>
            <person name="Christoffels A."/>
            <person name="Clutterbuck D.R."/>
            <person name="Crowe M.L."/>
            <person name="Dalla E."/>
            <person name="Dalrymple B.P."/>
            <person name="de Bono B."/>
            <person name="Della Gatta G."/>
            <person name="di Bernardo D."/>
            <person name="Down T."/>
            <person name="Engstrom P."/>
            <person name="Fagiolini M."/>
            <person name="Faulkner G."/>
            <person name="Fletcher C.F."/>
            <person name="Fukushima T."/>
            <person name="Furuno M."/>
            <person name="Futaki S."/>
            <person name="Gariboldi M."/>
            <person name="Georgii-Hemming P."/>
            <person name="Gingeras T.R."/>
            <person name="Gojobori T."/>
            <person name="Green R.E."/>
            <person name="Gustincich S."/>
            <person name="Harbers M."/>
            <person name="Hayashi Y."/>
            <person name="Hensch T.K."/>
            <person name="Hirokawa N."/>
            <person name="Hill D."/>
            <person name="Huminiecki L."/>
            <person name="Iacono M."/>
            <person name="Ikeo K."/>
            <person name="Iwama A."/>
            <person name="Ishikawa T."/>
            <person name="Jakt M."/>
            <person name="Kanapin A."/>
            <person name="Katoh M."/>
            <person name="Kawasawa Y."/>
            <person name="Kelso J."/>
            <person name="Kitamura H."/>
            <person name="Kitano H."/>
            <person name="Kollias G."/>
            <person name="Krishnan S.P."/>
            <person name="Kruger A."/>
            <person name="Kummerfeld S.K."/>
            <person name="Kurochkin I.V."/>
            <person name="Lareau L.F."/>
            <person name="Lazarevic D."/>
            <person name="Lipovich L."/>
            <person name="Liu J."/>
            <person name="Liuni S."/>
            <person name="McWilliam S."/>
            <person name="Madan Babu M."/>
            <person name="Madera M."/>
            <person name="Marchionni L."/>
            <person name="Matsuda H."/>
            <person name="Matsuzawa S."/>
            <person name="Miki H."/>
            <person name="Mignone F."/>
            <person name="Miyake S."/>
            <person name="Morris K."/>
            <person name="Mottagui-Tabar S."/>
            <person name="Mulder N."/>
            <person name="Nakano N."/>
            <person name="Nakauchi H."/>
            <person name="Ng P."/>
            <person name="Nilsson R."/>
            <person name="Nishiguchi S."/>
            <person name="Nishikawa S."/>
            <person name="Nori F."/>
            <person name="Ohara O."/>
            <person name="Okazaki Y."/>
            <person name="Orlando V."/>
            <person name="Pang K.C."/>
            <person name="Pavan W.J."/>
            <person name="Pavesi G."/>
            <person name="Pesole G."/>
            <person name="Petrovsky N."/>
            <person name="Piazza S."/>
            <person name="Reed J."/>
            <person name="Reid J.F."/>
            <person name="Ring B.Z."/>
            <person name="Ringwald M."/>
            <person name="Rost B."/>
            <person name="Ruan Y."/>
            <person name="Salzberg S.L."/>
            <person name="Sandelin A."/>
            <person name="Schneider C."/>
            <person name="Schoenbach C."/>
            <person name="Sekiguchi K."/>
            <person name="Semple C.A."/>
            <person name="Seno S."/>
            <person name="Sessa L."/>
            <person name="Sheng Y."/>
            <person name="Shibata Y."/>
            <person name="Shimada H."/>
            <person name="Shimada K."/>
            <person name="Silva D."/>
            <person name="Sinclair B."/>
            <person name="Sperling S."/>
            <person name="Stupka E."/>
            <person name="Sugiura K."/>
            <person name="Sultana R."/>
            <person name="Takenaka Y."/>
            <person name="Taki K."/>
            <person name="Tammoja K."/>
            <person name="Tan S.L."/>
            <person name="Tang S."/>
            <person name="Taylor M.S."/>
            <person name="Tegner J."/>
            <person name="Teichmann S.A."/>
            <person name="Ueda H.R."/>
            <person name="van Nimwegen E."/>
            <person name="Verardo R."/>
            <person name="Wei C.L."/>
            <person name="Yagi K."/>
            <person name="Yamanishi H."/>
            <person name="Zabarovsky E."/>
            <person name="Zhu S."/>
            <person name="Zimmer A."/>
            <person name="Hide W."/>
            <person name="Bult C."/>
            <person name="Grimmond S.M."/>
            <person name="Teasdale R.D."/>
            <person name="Liu E.T."/>
            <person name="Brusic V."/>
            <person name="Quackenbush J."/>
            <person name="Wahlestedt C."/>
            <person name="Mattick J.S."/>
            <person name="Hume D.A."/>
            <person name="Kai C."/>
            <person name="Sasaki D."/>
            <person name="Tomaru Y."/>
            <person name="Fukuda S."/>
            <person name="Kanamori-Katayama M."/>
            <person name="Suzuki M."/>
            <person name="Aoki J."/>
            <person name="Arakawa T."/>
            <person name="Iida J."/>
            <person name="Imamura K."/>
            <person name="Itoh M."/>
            <person name="Kato T."/>
            <person name="Kawaji H."/>
            <person name="Kawagashira N."/>
            <person name="Kawashima T."/>
            <person name="Kojima M."/>
            <person name="Kondo S."/>
            <person name="Konno H."/>
            <person name="Nakano K."/>
            <person name="Ninomiya N."/>
            <person name="Nishio T."/>
            <person name="Okada M."/>
            <person name="Plessy C."/>
            <person name="Shibata K."/>
            <person name="Shiraki T."/>
            <person name="Suzuki S."/>
            <person name="Tagami M."/>
            <person name="Waki K."/>
            <person name="Watahiki A."/>
            <person name="Okamura-Oho Y."/>
            <person name="Suzuki H."/>
            <person name="Kawai J."/>
            <person name="Hayashizaki Y."/>
        </authorList>
    </citation>
    <scope>NUCLEOTIDE SEQUENCE [LARGE SCALE MRNA]</scope>
    <source>
        <strain>C57BL/6J</strain>
        <tissue>Embryo</tissue>
        <tissue>Fetal brain</tissue>
        <tissue>Thymus</tissue>
    </source>
</reference>
<reference key="3">
    <citation type="journal article" date="2004" name="Genome Res.">
        <title>The status, quality, and expansion of the NIH full-length cDNA project: the Mammalian Gene Collection (MGC).</title>
        <authorList>
            <consortium name="The MGC Project Team"/>
        </authorList>
    </citation>
    <scope>NUCLEOTIDE SEQUENCE [LARGE SCALE MRNA]</scope>
    <source>
        <strain>C57BL/6J</strain>
        <strain>CD-1</strain>
        <tissue>Brain</tissue>
        <tissue>Neural stem cell</tissue>
    </source>
</reference>
<reference key="4">
    <citation type="journal article" date="2004" name="DNA Res.">
        <title>Prediction of the coding sequences of mouse homologues of KIAA gene: IV. The complete nucleotide sequences of 500 mouse KIAA-homologous cDNAs identified by screening of terminal sequences of cDNA clones randomly sampled from size-fractionated libraries.</title>
        <authorList>
            <person name="Okazaki N."/>
            <person name="Kikuno R."/>
            <person name="Ohara R."/>
            <person name="Inamoto S."/>
            <person name="Koseki H."/>
            <person name="Hiraoka S."/>
            <person name="Saga Y."/>
            <person name="Seino S."/>
            <person name="Nishimura M."/>
            <person name="Kaisho T."/>
            <person name="Hoshino K."/>
            <person name="Kitamura H."/>
            <person name="Nagase T."/>
            <person name="Ohara O."/>
            <person name="Koga H."/>
        </authorList>
    </citation>
    <scope>NUCLEOTIDE SEQUENCE [LARGE SCALE MRNA] OF 9-592</scope>
    <source>
        <tissue>Fetal brain</tissue>
    </source>
</reference>
<reference key="5">
    <citation type="journal article" date="1998" name="Nucleic Acids Res.">
        <title>Characterization of photolyase/blue-light receptor homologs in mouse and human cells.</title>
        <authorList>
            <person name="Kobayashi K."/>
            <person name="Kanno S."/>
            <person name="Smit B."/>
            <person name="van der Horst G.T.J."/>
            <person name="Takao M."/>
            <person name="Yasui A."/>
        </authorList>
    </citation>
    <scope>NUCLEOTIDE SEQUENCE [MRNA] OF 24-592</scope>
    <scope>TISSUE SPECIFICITY</scope>
    <scope>SUBCELLULAR LOCATION</scope>
    <source>
        <tissue>Liver</tissue>
    </source>
</reference>
<reference key="6">
    <citation type="journal article" date="1999" name="Brain Res. Mol. Brain Res.">
        <title>Circadian regulation of cryptochrome genes in the mouse.</title>
        <authorList>
            <person name="Miyamoto Y."/>
            <person name="Sancar A."/>
        </authorList>
    </citation>
    <scope>TISSUE SPECIFICITY</scope>
    <scope>INDUCTION</scope>
</reference>
<reference key="7">
    <citation type="journal article" date="2001" name="Cell">
        <title>Posttranslational mechanisms regulate the mammalian circadian clock.</title>
        <authorList>
            <person name="Lee C."/>
            <person name="Etchegaray J.-P."/>
            <person name="Cagampang F.R.A."/>
            <person name="Loudon A.S.I."/>
            <person name="Reppert S.M."/>
        </authorList>
    </citation>
    <scope>IDENTIFICATION IN A COMPLEX WITH CLOCK; PER1; PER2; CRY1; CRY2; CSNK1D AND CSNK1E</scope>
    <scope>SUBCELLULAR LOCATION</scope>
    <scope>TISSUE SPECIFICITY</scope>
</reference>
<reference key="8">
    <citation type="journal article" date="2004" name="Genes Cells">
        <title>Serine phosphorylation of mCRY1 and mCRY2 by mitogen-activated protein kinase.</title>
        <authorList>
            <person name="Sanada K."/>
            <person name="Harada Y."/>
            <person name="Sakai M."/>
            <person name="Todo T."/>
            <person name="Fukada Y."/>
        </authorList>
    </citation>
    <scope>PHOSPHORYLATION AT SER-265 AND SER-557</scope>
    <scope>MUTAGENESIS OF SER-265 AND SER-557</scope>
</reference>
<reference key="9">
    <citation type="journal article" date="2002" name="J. Biol. Chem.">
        <title>The circadian regulatory proteins BMAL1 and cryptochromes are substrates of casein kinase Iepsilon.</title>
        <authorList>
            <person name="Eide E.J."/>
            <person name="Vielhaber E.L."/>
            <person name="Hinz W.A."/>
            <person name="Virshup D.M."/>
        </authorList>
    </citation>
    <scope>INTERACTION WITH PER1 AND PER2</scope>
    <scope>PHOSPHORYLATION</scope>
    <scope>SUBCELLULAR LOCATION</scope>
</reference>
<reference key="10">
    <citation type="journal article" date="2004" name="Mol. Cell. Biol.">
        <title>Direct association between mouse PERIOD and CKIepsilon is critical for a functioning circadian clock.</title>
        <authorList>
            <person name="Lee C."/>
            <person name="Weaver D.R."/>
            <person name="Reppert S.M."/>
        </authorList>
    </citation>
    <scope>INTERACTION WITH PER1; PER2 AND PER3</scope>
</reference>
<reference key="11">
    <citation type="journal article" date="2005" name="J. Biol. Chem.">
        <title>Ser-557-phosphorylated mCRY2 is degraded upon synergistic phosphorylation by glycogen synthase kinase-3 beta.</title>
        <authorList>
            <person name="Harada Y."/>
            <person name="Sakai M."/>
            <person name="Kurabayashi N."/>
            <person name="Hirota T."/>
            <person name="Fukada Y."/>
        </authorList>
    </citation>
    <scope>PHOSPHORYLATION AT SER-557</scope>
    <scope>SUBCELLULAR LOCATION</scope>
</reference>
<reference key="12">
    <citation type="journal article" date="2006" name="Cell Cycle">
        <title>Post-translational regulation of circadian transcriptional CLOCK(NPAS2)/BMAL1 complex by CRYPTOCHROMES.</title>
        <authorList>
            <person name="Kondratov R.V."/>
            <person name="Kondratova A.A."/>
            <person name="Lee C."/>
            <person name="Gorbacheva V.Y."/>
            <person name="Chernov M.V."/>
            <person name="Antoch M.P."/>
        </authorList>
    </citation>
    <scope>INTERACTION WITH CLOCK-BMAL1 COMPLEX</scope>
    <scope>FUNCTION</scope>
</reference>
<reference key="13">
    <citation type="journal article" date="2006" name="J. Biol. Chem.">
        <title>The polycomb group protein EZH2 is required for mammalian circadian clock function.</title>
        <authorList>
            <person name="Etchegaray J.P."/>
            <person name="Yang X."/>
            <person name="DeBruyne J.P."/>
            <person name="Peters A.H."/>
            <person name="Weaver D.R."/>
            <person name="Jenuwein T."/>
            <person name="Reppert S.M."/>
        </authorList>
    </citation>
    <scope>INTERACTION WITH CLOCK AND BMAL1</scope>
</reference>
<reference key="14">
    <citation type="journal article" date="2007" name="Biochem. Biophys. Res. Commun.">
        <title>The negative transcription factor E4BP4 is associated with circadian clock protein PERIOD2.</title>
        <authorList>
            <person name="Ohno T."/>
            <person name="Onishi Y."/>
            <person name="Ishida N."/>
        </authorList>
    </citation>
    <scope>INTERACTION WITH NFIL3</scope>
</reference>
<reference key="15">
    <citation type="journal article" date="2007" name="Cell">
        <title>Circadian mutant Overtime reveals F-box protein FBXL3 regulation of cryptochrome and period gene expression.</title>
        <authorList>
            <person name="Siepka S.M."/>
            <person name="Yoo S.H."/>
            <person name="Park J."/>
            <person name="Song W."/>
            <person name="Kumar V."/>
            <person name="Hu Y."/>
            <person name="Lee C."/>
            <person name="Takahashi J.S."/>
        </authorList>
    </citation>
    <scope>INTERACTION WITH FBXL3</scope>
    <scope>UBIQUITINATION</scope>
</reference>
<reference key="16">
    <citation type="journal article" date="2007" name="Nat. Cell Biol.">
        <title>CIPC is a mammalian circadian clock protein without invertebrate homologues.</title>
        <authorList>
            <person name="Zhao W.N."/>
            <person name="Malinin N."/>
            <person name="Yang F.C."/>
            <person name="Staknis D."/>
            <person name="Gekakis N."/>
            <person name="Maier B."/>
            <person name="Reischl S."/>
            <person name="Kramer A."/>
            <person name="Weitz C.J."/>
        </authorList>
    </citation>
    <scope>FUNCTION</scope>
</reference>
<reference key="17">
    <citation type="journal article" date="2009" name="Mol. Cell">
        <title>Rhythmic PER abundance defines a critical nodal point for negative feedback within the circadian clock mechanism.</title>
        <authorList>
            <person name="Chen R."/>
            <person name="Schirmer A."/>
            <person name="Lee Y."/>
            <person name="Lee H."/>
            <person name="Kumar V."/>
            <person name="Yoo S.H."/>
            <person name="Takahashi J.S."/>
            <person name="Lee C."/>
        </authorList>
    </citation>
    <scope>INTERACTION WITH BMAL1 AND CLOCK</scope>
    <scope>INDUCTION</scope>
</reference>
<reference key="18">
    <citation type="journal article" date="2009" name="Science">
        <title>Circadian clock feedback cycle through NAMPT-mediated NAD+ biosynthesis.</title>
        <authorList>
            <person name="Ramsey K.M."/>
            <person name="Yoshino J."/>
            <person name="Brace C.S."/>
            <person name="Abrassart D."/>
            <person name="Kobayashi Y."/>
            <person name="Marcheva B."/>
            <person name="Hong H.K."/>
            <person name="Chong J.L."/>
            <person name="Buhr E.D."/>
            <person name="Lee C."/>
            <person name="Takahashi J.S."/>
            <person name="Imai S."/>
            <person name="Bass J."/>
        </authorList>
    </citation>
    <scope>FUNCTION</scope>
</reference>
<reference key="19">
    <citation type="journal article" date="2010" name="BMC Mol. Biol.">
        <title>Identification of two amino acids in the C-terminal domain of mouse CRY2 essential for PER2 interaction.</title>
        <authorList>
            <person name="Ozber N."/>
            <person name="Baris I."/>
            <person name="Tatlici G."/>
            <person name="Gur I."/>
            <person name="Kilinc S."/>
            <person name="Unal E.B."/>
            <person name="Kavakli I.H."/>
        </authorList>
    </citation>
    <scope>INTERACTION WITH BMAL1 AND PER2</scope>
    <scope>SUBCELLULAR LOCATION</scope>
    <scope>MUTAGENESIS OF ARG-501 AND LYS-503</scope>
</reference>
<reference key="20">
    <citation type="journal article" date="2010" name="Mol. Cell. Biol.">
        <title>DYRK1A and glycogen synthase kinase 3beta, a dual-kinase mechanism directing proteasomal degradation of CRY2 for circadian timekeeping.</title>
        <authorList>
            <person name="Kurabayashi N."/>
            <person name="Hirota T."/>
            <person name="Sakai M."/>
            <person name="Sanada K."/>
            <person name="Fukada Y."/>
        </authorList>
    </citation>
    <scope>PHOSPHORYLATION AT SER-553 AND SER-557</scope>
    <scope>MUTAGENESIS OF SER-553 AND SER-557</scope>
</reference>
<reference key="21">
    <citation type="journal article" date="2010" name="Nat. Med.">
        <title>Cryptochrome mediates circadian regulation of cAMP signaling and hepatic gluconeogenesis.</title>
        <authorList>
            <person name="Zhang E.E."/>
            <person name="Liu Y."/>
            <person name="Dentin R."/>
            <person name="Pongsawakul P.Y."/>
            <person name="Liu A.C."/>
            <person name="Hirota T."/>
            <person name="Nusinow D.A."/>
            <person name="Sun X."/>
            <person name="Landais S."/>
            <person name="Kodama Y."/>
            <person name="Brenner D.A."/>
            <person name="Montminy M."/>
            <person name="Kay S.A."/>
        </authorList>
    </citation>
    <scope>FUNCTION IN GLUCONEOGENESIS</scope>
    <scope>DISRUPTION PHENOTYPE</scope>
</reference>
<reference key="22">
    <citation type="journal article" date="2011" name="Nature">
        <title>Cryptochromes mediate rhythmic repression of the glucocorticoid receptor.</title>
        <authorList>
            <person name="Lamia K.A."/>
            <person name="Papp S.J."/>
            <person name="Yu R.T."/>
            <person name="Barish G.D."/>
            <person name="Uhlenhaut N.H."/>
            <person name="Jonker J.W."/>
            <person name="Downes M."/>
            <person name="Evans R.M."/>
        </authorList>
    </citation>
    <scope>FUNCTION AS NR3C1 REPRESSOR</scope>
    <scope>INTERACTION WITH AR AND NR3C1</scope>
    <scope>DISRUPTION PHENOTYPE</scope>
</reference>
<reference key="23">
    <citation type="journal article" date="2012" name="Science">
        <title>Identification of small molecule activators of cryptochrome.</title>
        <authorList>
            <person name="Hirota T."/>
            <person name="Lee J.W."/>
            <person name="St John P.C."/>
            <person name="Sawa M."/>
            <person name="Iwaisako K."/>
            <person name="Noguchi T."/>
            <person name="Pongsawakul P.Y."/>
            <person name="Sonntag T."/>
            <person name="Welsh D.K."/>
            <person name="Brenner D.A."/>
            <person name="Doyle F.J. III"/>
            <person name="Schultz P.G."/>
            <person name="Kay S.A."/>
        </authorList>
    </citation>
    <scope>ACTIVITY REGULATION</scope>
</reference>
<reference key="24">
    <citation type="journal article" date="2013" name="Am. J. Physiol.">
        <title>A role for the circadian clock protein Per1 in the regulation of aldosterone levels and renal Na+ retention.</title>
        <authorList>
            <person name="Richards J."/>
            <person name="Cheng K.Y."/>
            <person name="All S."/>
            <person name="Skopis G."/>
            <person name="Jeffers L."/>
            <person name="Lynch I.J."/>
            <person name="Wingo C.S."/>
            <person name="Gumz M.L."/>
        </authorList>
    </citation>
    <scope>FUNCTION AS TRANSCRIPTIONAL REPRESSOR</scope>
    <scope>INTERACTION WITH PER1</scope>
    <scope>TISSUE SPECIFICITY</scope>
</reference>
<reference key="25">
    <citation type="journal article" date="2013" name="Am. J. Physiol.">
        <title>High-fat diet-induced hyperinsulinemia and tissue-specific insulin resistance in Cry-deficient mice.</title>
        <authorList>
            <person name="Barclay J.L."/>
            <person name="Shostak A."/>
            <person name="Leliavski A."/>
            <person name="Tsang A.H."/>
            <person name="Johren O."/>
            <person name="Muller-Fielitz H."/>
            <person name="Landgraf D."/>
            <person name="Naujokat N."/>
            <person name="van der Horst G.T."/>
            <person name="Oster H."/>
        </authorList>
    </citation>
    <scope>FUNCTION IN METABOLISM</scope>
    <scope>DISRUPTION PHENOTYPE</scope>
</reference>
<reference key="26">
    <citation type="journal article" date="2013" name="Cell">
        <title>Competing E3 ubiquitin ligases govern circadian periodicity by degradation of CRY in nucleus and cytoplasm.</title>
        <authorList>
            <person name="Yoo S.H."/>
            <person name="Mohawk J.A."/>
            <person name="Siepka S.M."/>
            <person name="Shan Y."/>
            <person name="Huh S.K."/>
            <person name="Hong H.K."/>
            <person name="Kornblum I."/>
            <person name="Kumar V."/>
            <person name="Koike N."/>
            <person name="Xu M."/>
            <person name="Nussbaum J."/>
            <person name="Liu X."/>
            <person name="Chen Z."/>
            <person name="Chen Z.J."/>
            <person name="Green C.B."/>
            <person name="Takahashi J.S."/>
        </authorList>
    </citation>
    <scope>UBIQUITINATION BY THE SCF(FBXL3) AND SCF(FBXL21) COMPLEXES</scope>
    <scope>INTERACTION WITH FBXL3 AND FBXL21</scope>
</reference>
<reference key="27">
    <citation type="journal article" date="2013" name="Cell">
        <title>FBXL21 regulates oscillation of the circadian clock through ubiquitination and stabilization of cryptochromes.</title>
        <authorList>
            <person name="Hirano A."/>
            <person name="Yumimoto K."/>
            <person name="Tsunematsu R."/>
            <person name="Matsumoto M."/>
            <person name="Oyama M."/>
            <person name="Kozuka-Hata H."/>
            <person name="Nakagawa T."/>
            <person name="Lanjakornsiripan D."/>
            <person name="Nakayama K.I."/>
            <person name="Fukada Y."/>
        </authorList>
    </citation>
    <scope>UBIQUITINATION BY THE SCF(FBXL3) AND SCF(FBXL21) COMPLEXES</scope>
    <scope>UBIQUITINATION AT LYS-125; LYS-241; LYS-347; LYS-474 AND LYS-503</scope>
    <scope>INTERACTION WITH FBXL3 AND FBXL21</scope>
</reference>
<reference key="28">
    <citation type="journal article" date="2013" name="J. Biol. Chem.">
        <title>Phosphorylation of the cryptochrome 1 C-terminal tail regulates circadian period length.</title>
        <authorList>
            <person name="Gao P."/>
            <person name="Yoo S.H."/>
            <person name="Lee K.J."/>
            <person name="Rosensweig C."/>
            <person name="Takahashi J.S."/>
            <person name="Chen B.P."/>
            <person name="Green C.B."/>
        </authorList>
    </citation>
    <scope>INTERACTION WITH PRKDC</scope>
</reference>
<reference key="29">
    <citation type="journal article" date="2013" name="J. Neurosci.">
        <title>Distinct and separable roles for endogenous CRY1 and CRY2 within the circadian molecular clockwork of the suprachiasmatic nucleus, as revealed by the Fbxl3(Afh) mutation.</title>
        <authorList>
            <person name="Anand S.N."/>
            <person name="Maywood E.S."/>
            <person name="Chesham J.E."/>
            <person name="Joynson G."/>
            <person name="Banks G.T."/>
            <person name="Hastings M.H."/>
            <person name="Nolan P.M."/>
        </authorList>
    </citation>
    <scope>FUNCTION IN CIRCADIAN CLOCK</scope>
    <scope>DISRUPTION PHENOTYPE</scope>
</reference>
<reference key="30">
    <citation type="journal article" date="2013" name="Nat. Commun.">
        <title>Cryptochromes are critical for the development of coherent circadian rhythms in the mouse suprachiasmatic nucleus.</title>
        <authorList>
            <person name="Ono D."/>
            <person name="Honma S."/>
            <person name="Honma K."/>
        </authorList>
    </citation>
    <scope>FUNCTION IN CIRCADIAN RHYTHM MAINTENANCE</scope>
</reference>
<reference key="31">
    <citation type="journal article" date="2013" name="Physiol. Rev.">
        <title>Metabolism and the circadian clock converge.</title>
        <authorList>
            <person name="Eckel-Mahan K."/>
            <person name="Sassone-Corsi P."/>
        </authorList>
    </citation>
    <scope>REVIEW</scope>
</reference>
<reference key="32">
    <citation type="journal article" date="2014" name="PLoS Biol.">
        <title>A novel protein, CHRONO, functions as a core component of the mammalian circadian clock.</title>
        <authorList>
            <person name="Goriki A."/>
            <person name="Hatanaka F."/>
            <person name="Myung J."/>
            <person name="Kim J.K."/>
            <person name="Yoritaka T."/>
            <person name="Tanoue S."/>
            <person name="Abe T."/>
            <person name="Kiyonari H."/>
            <person name="Fujimoto K."/>
            <person name="Kato Y."/>
            <person name="Todo T."/>
            <person name="Matsubara A."/>
            <person name="Forger D."/>
            <person name="Takumi T."/>
        </authorList>
    </citation>
    <scope>INTERACTION WITH CIART</scope>
</reference>
<reference key="33">
    <citation type="journal article" date="2014" name="Trends Cell Biol.">
        <title>Molecular architecture of the mammalian circadian clock.</title>
        <authorList>
            <person name="Partch C.L."/>
            <person name="Green C.B."/>
            <person name="Takahashi J.S."/>
        </authorList>
    </citation>
    <scope>REVIEW</scope>
</reference>
<reference key="34">
    <citation type="journal article" date="2016" name="Cell Rep.">
        <title>Distinct roles of HDAC3 in the core circadian negative feedback loop are critical for clock function.</title>
        <authorList>
            <person name="Shi G."/>
            <person name="Xie P."/>
            <person name="Qu Z."/>
            <person name="Zhang Z."/>
            <person name="Dong Z."/>
            <person name="An Y."/>
            <person name="Xing L."/>
            <person name="Liu Z."/>
            <person name="Dong Y."/>
            <person name="Xu G."/>
            <person name="Yang L."/>
            <person name="Liu Y."/>
            <person name="Xu Y."/>
        </authorList>
    </citation>
    <scope>UBIQUITINATION AND PROTEASOMAL DEGRADATION</scope>
</reference>
<reference key="35">
    <citation type="journal article" date="2016" name="PLoS ONE">
        <title>USP7 and TDP-43: pleiotropic regulation of cryptochrome protein stability paces the oscillation of the mammalian circadian clock.</title>
        <authorList>
            <person name="Hirano A."/>
            <person name="Nakagawa T."/>
            <person name="Yoshitane H."/>
            <person name="Oyama M."/>
            <person name="Kozuka-Hata H."/>
            <person name="Lanjakornsiripan D."/>
            <person name="Fukada Y."/>
        </authorList>
    </citation>
    <scope>DEUBIQUITINATION BY USP7</scope>
    <scope>INTERACTION WITH DDB1; USP7 AND TARDBP</scope>
</reference>
<reference key="36">
    <citation type="journal article" date="2017" name="Cell Metab.">
        <title>CRY1/2 selectively repress PPARdelta and limit exercise capacity.</title>
        <authorList>
            <person name="Jordan S.D."/>
            <person name="Kriebs A."/>
            <person name="Vaughan M."/>
            <person name="Duglan D."/>
            <person name="Fan W."/>
            <person name="Henriksson E."/>
            <person name="Huber A.L."/>
            <person name="Papp S.J."/>
            <person name="Nguyen M."/>
            <person name="Afetian M."/>
            <person name="Downes M."/>
            <person name="Yu R.T."/>
            <person name="Kralli A."/>
            <person name="Evans R.M."/>
            <person name="Lamia K.A."/>
        </authorList>
    </citation>
    <scope>FUNCTION</scope>
    <scope>DISRUPTION PHENOTYPE</scope>
    <scope>INTERACTION WITH PPARA; PPARD AND PPARG</scope>
</reference>
<reference key="37">
    <citation type="journal article" date="2017" name="Proc. Natl. Acad. Sci. U.S.A.">
        <title>Circadian repressors CRY1 and CRY2 broadly interact with nuclear receptors and modulate transcriptional activity.</title>
        <authorList>
            <person name="Kriebs A."/>
            <person name="Jordan S.D."/>
            <person name="Soto E."/>
            <person name="Henriksson E."/>
            <person name="Sandate C.R."/>
            <person name="Vaughan M.E."/>
            <person name="Chan A.B."/>
            <person name="Duglan D."/>
            <person name="Papp S.J."/>
            <person name="Huber A.L."/>
            <person name="Afetian M.E."/>
            <person name="Yu R.T."/>
            <person name="Zhao X."/>
            <person name="Downes M."/>
            <person name="Evans R.M."/>
            <person name="Lamia K.A."/>
        </authorList>
    </citation>
    <scope>FUNCTION</scope>
    <scope>INTERACTION WITH NR1I2; NR1I3; NR3C1; PPARD; VDR; AR AND HNF4A</scope>
    <scope>MUTAGENESIS OF GLY-351; GLY-354; SER-394; VAL-396 AND ARG-397</scope>
</reference>
<reference key="38">
    <citation type="journal article" date="2018" name="FASEB J.">
        <title>Differential roles for cryptochromes in the mammalian retinal clock.</title>
        <authorList>
            <person name="Wong J.C.Y."/>
            <person name="Smyllie N.J."/>
            <person name="Banks G.T."/>
            <person name="Pothecary C.A."/>
            <person name="Barnard A.R."/>
            <person name="Maywood E.S."/>
            <person name="Jagannath A."/>
            <person name="Hughes S."/>
            <person name="van der Horst G.T.J."/>
            <person name="MacLaren R.E."/>
            <person name="Hankins M.W."/>
            <person name="Hastings M.H."/>
            <person name="Nolan P.M."/>
            <person name="Foster R.G."/>
            <person name="Peirson S.N."/>
        </authorList>
    </citation>
    <scope>DISRUPTION PHENOTYPE</scope>
    <scope>TISSUE SPECIFICITY</scope>
</reference>
<reference key="39">
    <citation type="journal article" date="2013" name="Cell Res.">
        <title>Crystal structure of mammalian cryptochrome in complex with a small molecule competitor of its ubiquitin ligase.</title>
        <authorList>
            <person name="Nangle S."/>
            <person name="Xing W."/>
            <person name="Zheng N."/>
        </authorList>
    </citation>
    <scope>X-RAY CRYSTALLOGRAPHY (1.94 ANGSTROMS) OF 1-512 IN COMPLEX WITH UBIQUITIN LIGASE SYNTHETIC INHIBITOR</scope>
</reference>
<reference key="40">
    <citation type="journal article" date="2013" name="Nature">
        <title>SCF(FBXL3) ubiquitin ligase targets cryptochromes at their cofactor pocket.</title>
        <authorList>
            <person name="Xing W."/>
            <person name="Busino L."/>
            <person name="Hinds T.R."/>
            <person name="Marionni S.T."/>
            <person name="Saifee N.H."/>
            <person name="Bush M.F."/>
            <person name="Pagano M."/>
            <person name="Zheng N."/>
        </authorList>
    </citation>
    <scope>X-RAY CRYSTALLOGRAPHY (2.2 ANGSTROMS) OF 1-512 IN COMPLEXES WITH FAD; SKP1 AND FBXL3</scope>
    <scope>IDENTIFICATION IN A COMPLEX WITH SKP1 AND FBXL3</scope>
    <scope>COFACTOR</scope>
    <scope>IDENTIFICATION BY MASS SPECTROMETRY</scope>
    <scope>FAD-BINDING SITES</scope>
    <scope>MUTAGENESIS OF TRP-310; ASP-339; ARG-376; PHE-428; ILE-499 AND LEU-517</scope>
</reference>
<sequence length="592" mass="66850">MAAAAVVAATVPAQSMGADGASSVHWFRKGLRLHDNPALLAAVRGARCVRCVYILDPWFAASSSVGINRWRFLLQSLEDLDTSLRKLNSRLFVVRGQPADVFPRLFKEWGVTRLTFEYDSEPFGKERDAAIMKMAKEAGVEVVTENSHTLYDLDRIIELNGQKPPLTYKRFQALISRMELPKKPAVAVSSQQMESCRAEIQENHDDTYGVPSLEELGFPTEGLGPAVWQGGETEALARLDKHLERKAWVANYERPRMNANSLLASPTGLSPYLRFGCLSCRLFYYRLWDLYKKVKRNSTPPLSLFGQLLWREFFYTAATNNPRFDRMEGNPICIQIPWDRNPEALAKWAEGKTGFPWIDAIMTQLRQEGWIHHLARHAVACFLTRGDLWVSWESGVRVFDELLLDADFSVNAGSWMWLSCSAFFQQFFHCYCPVGFGRRTDPSGDYIRRYLPKLKGFPSRYIYEPWNAPESVQKAAKCIIGVDYPRPIVNHAETSRLNIERMKQIYQQLSRYRGLCLLASVPSCVEDLSHPVAEPGSSQAGSISNTGPRALSSGPASPKRKLEAAEEPPGEELTKRARVTEMPTQEPASKDS</sequence>
<accession>Q9R194</accession>
<accession>O08706</accession>
<accession>Q6A024</accession>
<dbReference type="EMBL" id="AF156987">
    <property type="protein sequence ID" value="AAD46561.1"/>
    <property type="molecule type" value="mRNA"/>
</dbReference>
<dbReference type="EMBL" id="AK041696">
    <property type="protein sequence ID" value="BAC31037.1"/>
    <property type="molecule type" value="mRNA"/>
</dbReference>
<dbReference type="EMBL" id="AK133781">
    <property type="protein sequence ID" value="BAE21836.1"/>
    <property type="molecule type" value="mRNA"/>
</dbReference>
<dbReference type="EMBL" id="BC054794">
    <property type="protein sequence ID" value="AAH54794.1"/>
    <property type="molecule type" value="mRNA"/>
</dbReference>
<dbReference type="EMBL" id="BC066799">
    <property type="protein sequence ID" value="AAH66799.1"/>
    <property type="molecule type" value="mRNA"/>
</dbReference>
<dbReference type="EMBL" id="AK172994">
    <property type="protein sequence ID" value="BAD32272.1"/>
    <property type="molecule type" value="mRNA"/>
</dbReference>
<dbReference type="EMBL" id="AB003433">
    <property type="protein sequence ID" value="BAA19864.1"/>
    <property type="molecule type" value="mRNA"/>
</dbReference>
<dbReference type="CCDS" id="CCDS16447.1"/>
<dbReference type="RefSeq" id="NP_034093.1">
    <property type="nucleotide sequence ID" value="NM_009963.4"/>
</dbReference>
<dbReference type="RefSeq" id="XP_017170770.1">
    <property type="nucleotide sequence ID" value="XM_017315281.3"/>
</dbReference>
<dbReference type="PDB" id="4I6E">
    <property type="method" value="X-ray"/>
    <property type="resolution" value="2.70 A"/>
    <property type="chains" value="A=1-512"/>
</dbReference>
<dbReference type="PDB" id="4I6G">
    <property type="method" value="X-ray"/>
    <property type="resolution" value="2.20 A"/>
    <property type="chains" value="A/B=1-512"/>
</dbReference>
<dbReference type="PDB" id="4I6J">
    <property type="method" value="X-ray"/>
    <property type="resolution" value="2.70 A"/>
    <property type="chains" value="A=1-544"/>
</dbReference>
<dbReference type="PDB" id="4MLP">
    <property type="method" value="X-ray"/>
    <property type="resolution" value="1.94 A"/>
    <property type="chains" value="A/B/C/D=1-512"/>
</dbReference>
<dbReference type="PDB" id="4U8H">
    <property type="method" value="X-ray"/>
    <property type="resolution" value="2.80 A"/>
    <property type="chains" value="A/C=1-510"/>
</dbReference>
<dbReference type="PDB" id="6KX8">
    <property type="method" value="X-ray"/>
    <property type="resolution" value="2.25 A"/>
    <property type="chains" value="A/B=1-512"/>
</dbReference>
<dbReference type="PDB" id="7D0N">
    <property type="method" value="X-ray"/>
    <property type="resolution" value="2.80 A"/>
    <property type="chains" value="A=1-512"/>
</dbReference>
<dbReference type="PDB" id="7EJ9">
    <property type="method" value="X-ray"/>
    <property type="resolution" value="2.60 A"/>
    <property type="chains" value="A/B=1-512"/>
</dbReference>
<dbReference type="PDB" id="7V8Y">
    <property type="method" value="X-ray"/>
    <property type="resolution" value="1.90 A"/>
    <property type="chains" value="A=1-512"/>
</dbReference>
<dbReference type="PDB" id="7V8Z">
    <property type="method" value="X-ray"/>
    <property type="resolution" value="1.95 A"/>
    <property type="chains" value="A=1-512"/>
</dbReference>
<dbReference type="PDBsum" id="4I6E"/>
<dbReference type="PDBsum" id="4I6G"/>
<dbReference type="PDBsum" id="4I6J"/>
<dbReference type="PDBsum" id="4MLP"/>
<dbReference type="PDBsum" id="4U8H"/>
<dbReference type="PDBsum" id="6KX8"/>
<dbReference type="PDBsum" id="7D0N"/>
<dbReference type="PDBsum" id="7EJ9"/>
<dbReference type="PDBsum" id="7V8Y"/>
<dbReference type="PDBsum" id="7V8Z"/>
<dbReference type="SMR" id="Q9R194"/>
<dbReference type="BioGRID" id="198907">
    <property type="interactions" value="16"/>
</dbReference>
<dbReference type="ComplexPortal" id="CPX-3210">
    <property type="entry name" value="Cry2-Per2 complex"/>
</dbReference>
<dbReference type="ComplexPortal" id="CPX-3214">
    <property type="entry name" value="Cry2-Per1 complex"/>
</dbReference>
<dbReference type="ComplexPortal" id="CPX-3218">
    <property type="entry name" value="Cry2-Per3 complex"/>
</dbReference>
<dbReference type="CORUM" id="Q9R194"/>
<dbReference type="DIP" id="DIP-38517N"/>
<dbReference type="FunCoup" id="Q9R194">
    <property type="interactions" value="2054"/>
</dbReference>
<dbReference type="IntAct" id="Q9R194">
    <property type="interactions" value="25"/>
</dbReference>
<dbReference type="MINT" id="Q9R194"/>
<dbReference type="STRING" id="10090.ENSMUSP00000088047"/>
<dbReference type="GlyGen" id="Q9R194">
    <property type="glycosylation" value="2 sites, 1 O-linked glycan (2 sites)"/>
</dbReference>
<dbReference type="iPTMnet" id="Q9R194"/>
<dbReference type="PhosphoSitePlus" id="Q9R194"/>
<dbReference type="PaxDb" id="10090-ENSMUSP00000088047"/>
<dbReference type="PeptideAtlas" id="Q9R194"/>
<dbReference type="ProteomicsDB" id="284176"/>
<dbReference type="Pumba" id="Q9R194"/>
<dbReference type="Antibodypedia" id="26186">
    <property type="antibodies" value="255 antibodies from 34 providers"/>
</dbReference>
<dbReference type="Ensembl" id="ENSMUST00000090559.12">
    <property type="protein sequence ID" value="ENSMUSP00000088047.6"/>
    <property type="gene ID" value="ENSMUSG00000068742.12"/>
</dbReference>
<dbReference type="Ensembl" id="ENSMUST00000111278.2">
    <property type="protein sequence ID" value="ENSMUSP00000106909.2"/>
    <property type="gene ID" value="ENSMUSG00000068742.12"/>
</dbReference>
<dbReference type="GeneID" id="12953"/>
<dbReference type="KEGG" id="mmu:12953"/>
<dbReference type="UCSC" id="uc008kxy.2">
    <property type="organism name" value="mouse"/>
</dbReference>
<dbReference type="AGR" id="MGI:1270859"/>
<dbReference type="CTD" id="1408"/>
<dbReference type="MGI" id="MGI:1270859">
    <property type="gene designation" value="Cry2"/>
</dbReference>
<dbReference type="VEuPathDB" id="HostDB:ENSMUSG00000068742"/>
<dbReference type="eggNOG" id="KOG0133">
    <property type="taxonomic scope" value="Eukaryota"/>
</dbReference>
<dbReference type="GeneTree" id="ENSGT00940000159073"/>
<dbReference type="HOGENOM" id="CLU_010348_3_4_1"/>
<dbReference type="InParanoid" id="Q9R194"/>
<dbReference type="OMA" id="EFFYRIM"/>
<dbReference type="OrthoDB" id="435881at2759"/>
<dbReference type="PhylomeDB" id="Q9R194"/>
<dbReference type="TreeFam" id="TF323191"/>
<dbReference type="BioGRID-ORCS" id="12953">
    <property type="hits" value="2 hits in 79 CRISPR screens"/>
</dbReference>
<dbReference type="EvolutionaryTrace" id="Q9R194"/>
<dbReference type="PRO" id="PR:Q9R194"/>
<dbReference type="Proteomes" id="UP000000589">
    <property type="component" value="Chromosome 2"/>
</dbReference>
<dbReference type="RNAct" id="Q9R194">
    <property type="molecule type" value="protein"/>
</dbReference>
<dbReference type="Bgee" id="ENSMUSG00000068742">
    <property type="expression patterns" value="Expressed in olfactory tubercle and 248 other cell types or tissues"/>
</dbReference>
<dbReference type="GO" id="GO:1990512">
    <property type="term" value="C:Cry-Per complex"/>
    <property type="evidence" value="ECO:0000353"/>
    <property type="project" value="ComplexPortal"/>
</dbReference>
<dbReference type="GO" id="GO:0005829">
    <property type="term" value="C:cytosol"/>
    <property type="evidence" value="ECO:0000304"/>
    <property type="project" value="Reactome"/>
</dbReference>
<dbReference type="GO" id="GO:0005576">
    <property type="term" value="C:extracellular region"/>
    <property type="evidence" value="ECO:0007669"/>
    <property type="project" value="Ensembl"/>
</dbReference>
<dbReference type="GO" id="GO:0005739">
    <property type="term" value="C:mitochondrion"/>
    <property type="evidence" value="ECO:0000314"/>
    <property type="project" value="UniProtKB"/>
</dbReference>
<dbReference type="GO" id="GO:0016607">
    <property type="term" value="C:nuclear speck"/>
    <property type="evidence" value="ECO:0007669"/>
    <property type="project" value="Ensembl"/>
</dbReference>
<dbReference type="GO" id="GO:0005654">
    <property type="term" value="C:nucleoplasm"/>
    <property type="evidence" value="ECO:0000304"/>
    <property type="project" value="Reactome"/>
</dbReference>
<dbReference type="GO" id="GO:0005634">
    <property type="term" value="C:nucleus"/>
    <property type="evidence" value="ECO:0000314"/>
    <property type="project" value="UniProtKB"/>
</dbReference>
<dbReference type="GO" id="GO:0003684">
    <property type="term" value="F:damaged DNA binding"/>
    <property type="evidence" value="ECO:0007669"/>
    <property type="project" value="Ensembl"/>
</dbReference>
<dbReference type="GO" id="GO:0071949">
    <property type="term" value="F:FAD binding"/>
    <property type="evidence" value="ECO:0000314"/>
    <property type="project" value="UniProtKB"/>
</dbReference>
<dbReference type="GO" id="GO:0019900">
    <property type="term" value="F:kinase binding"/>
    <property type="evidence" value="ECO:0000353"/>
    <property type="project" value="UniProtKB"/>
</dbReference>
<dbReference type="GO" id="GO:0016922">
    <property type="term" value="F:nuclear receptor binding"/>
    <property type="evidence" value="ECO:0000353"/>
    <property type="project" value="UniProtKB"/>
</dbReference>
<dbReference type="GO" id="GO:0019902">
    <property type="term" value="F:phosphatase binding"/>
    <property type="evidence" value="ECO:0007669"/>
    <property type="project" value="Ensembl"/>
</dbReference>
<dbReference type="GO" id="GO:0009881">
    <property type="term" value="F:photoreceptor activity"/>
    <property type="evidence" value="ECO:0007669"/>
    <property type="project" value="UniProtKB-KW"/>
</dbReference>
<dbReference type="GO" id="GO:0019901">
    <property type="term" value="F:protein kinase binding"/>
    <property type="evidence" value="ECO:0000353"/>
    <property type="project" value="UniProtKB"/>
</dbReference>
<dbReference type="GO" id="GO:0004864">
    <property type="term" value="F:protein phosphatase inhibitor activity"/>
    <property type="evidence" value="ECO:0007669"/>
    <property type="project" value="Ensembl"/>
</dbReference>
<dbReference type="GO" id="GO:0003697">
    <property type="term" value="F:single-stranded DNA binding"/>
    <property type="evidence" value="ECO:0007669"/>
    <property type="project" value="Ensembl"/>
</dbReference>
<dbReference type="GO" id="GO:0000976">
    <property type="term" value="F:transcription cis-regulatory region binding"/>
    <property type="evidence" value="ECO:0000314"/>
    <property type="project" value="UniProtKB"/>
</dbReference>
<dbReference type="GO" id="GO:0032922">
    <property type="term" value="P:circadian regulation of gene expression"/>
    <property type="evidence" value="ECO:0000315"/>
    <property type="project" value="UniProtKB"/>
</dbReference>
<dbReference type="GO" id="GO:0007623">
    <property type="term" value="P:circadian rhythm"/>
    <property type="evidence" value="ECO:0000315"/>
    <property type="project" value="UniProtKB"/>
</dbReference>
<dbReference type="GO" id="GO:0043153">
    <property type="term" value="P:entrainment of circadian clock by photoperiod"/>
    <property type="evidence" value="ECO:0000315"/>
    <property type="project" value="UniProtKB"/>
</dbReference>
<dbReference type="GO" id="GO:0042593">
    <property type="term" value="P:glucose homeostasis"/>
    <property type="evidence" value="ECO:0000316"/>
    <property type="project" value="UniProtKB"/>
</dbReference>
<dbReference type="GO" id="GO:0019915">
    <property type="term" value="P:lipid storage"/>
    <property type="evidence" value="ECO:0000316"/>
    <property type="project" value="UniProtKB"/>
</dbReference>
<dbReference type="GO" id="GO:0042754">
    <property type="term" value="P:negative regulation of circadian rhythm"/>
    <property type="evidence" value="ECO:0000314"/>
    <property type="project" value="UniProtKB"/>
</dbReference>
<dbReference type="GO" id="GO:0045892">
    <property type="term" value="P:negative regulation of DNA-templated transcription"/>
    <property type="evidence" value="ECO:0000314"/>
    <property type="project" value="UniProtKB"/>
</dbReference>
<dbReference type="GO" id="GO:2000850">
    <property type="term" value="P:negative regulation of glucocorticoid secretion"/>
    <property type="evidence" value="ECO:0000316"/>
    <property type="project" value="UniProtKB"/>
</dbReference>
<dbReference type="GO" id="GO:2000323">
    <property type="term" value="P:negative regulation of nuclear receptor-mediated glucocorticoid signaling pathway"/>
    <property type="evidence" value="ECO:0000316"/>
    <property type="project" value="UniProtKB"/>
</dbReference>
<dbReference type="GO" id="GO:0000122">
    <property type="term" value="P:negative regulation of transcription by RNA polymerase II"/>
    <property type="evidence" value="ECO:0007669"/>
    <property type="project" value="Ensembl"/>
</dbReference>
<dbReference type="GO" id="GO:0006606">
    <property type="term" value="P:protein import into nucleus"/>
    <property type="evidence" value="ECO:0000353"/>
    <property type="project" value="MGI"/>
</dbReference>
<dbReference type="GO" id="GO:0042752">
    <property type="term" value="P:regulation of circadian rhythm"/>
    <property type="evidence" value="ECO:0000315"/>
    <property type="project" value="UniProtKB"/>
</dbReference>
<dbReference type="GO" id="GO:2000118">
    <property type="term" value="P:regulation of sodium-dependent phosphate transport"/>
    <property type="evidence" value="ECO:0007669"/>
    <property type="project" value="Ensembl"/>
</dbReference>
<dbReference type="GO" id="GO:0014823">
    <property type="term" value="P:response to activity"/>
    <property type="evidence" value="ECO:0000315"/>
    <property type="project" value="UniProtKB"/>
</dbReference>
<dbReference type="GO" id="GO:0032868">
    <property type="term" value="P:response to insulin"/>
    <property type="evidence" value="ECO:0000316"/>
    <property type="project" value="UniProtKB"/>
</dbReference>
<dbReference type="GO" id="GO:0009416">
    <property type="term" value="P:response to light stimulus"/>
    <property type="evidence" value="ECO:0000315"/>
    <property type="project" value="UniProtKB"/>
</dbReference>
<dbReference type="FunFam" id="1.10.579.10:FF:000001">
    <property type="entry name" value="Cryptochrome 1"/>
    <property type="match status" value="1"/>
</dbReference>
<dbReference type="FunFam" id="1.25.40.80:FF:000001">
    <property type="entry name" value="Cryptochrome circadian regulator 2"/>
    <property type="match status" value="1"/>
</dbReference>
<dbReference type="FunFam" id="1.25.40.80:FF:000003">
    <property type="entry name" value="cryptochrome-1 isoform X1"/>
    <property type="match status" value="1"/>
</dbReference>
<dbReference type="Gene3D" id="1.25.40.80">
    <property type="match status" value="1"/>
</dbReference>
<dbReference type="Gene3D" id="1.10.579.10">
    <property type="entry name" value="DNA Cyclobutane Dipyrimidine Photolyase, subunit A, domain 3"/>
    <property type="match status" value="1"/>
</dbReference>
<dbReference type="Gene3D" id="3.40.50.620">
    <property type="entry name" value="HUPs"/>
    <property type="match status" value="1"/>
</dbReference>
<dbReference type="InterPro" id="IPR036134">
    <property type="entry name" value="Crypto/Photolyase_FAD-like_sf"/>
</dbReference>
<dbReference type="InterPro" id="IPR036155">
    <property type="entry name" value="Crypto/Photolyase_N_sf"/>
</dbReference>
<dbReference type="InterPro" id="IPR005101">
    <property type="entry name" value="Cryptochr/Photolyase_FAD-bd"/>
</dbReference>
<dbReference type="InterPro" id="IPR002081">
    <property type="entry name" value="Cryptochrome/DNA_photolyase_1"/>
</dbReference>
<dbReference type="InterPro" id="IPR006050">
    <property type="entry name" value="DNA_photolyase_N"/>
</dbReference>
<dbReference type="InterPro" id="IPR014729">
    <property type="entry name" value="Rossmann-like_a/b/a_fold"/>
</dbReference>
<dbReference type="PANTHER" id="PTHR11455">
    <property type="entry name" value="CRYPTOCHROME"/>
    <property type="match status" value="1"/>
</dbReference>
<dbReference type="PANTHER" id="PTHR11455:SF15">
    <property type="entry name" value="CRYPTOCHROME-2"/>
    <property type="match status" value="1"/>
</dbReference>
<dbReference type="Pfam" id="PF00875">
    <property type="entry name" value="DNA_photolyase"/>
    <property type="match status" value="1"/>
</dbReference>
<dbReference type="Pfam" id="PF03441">
    <property type="entry name" value="FAD_binding_7"/>
    <property type="match status" value="1"/>
</dbReference>
<dbReference type="SUPFAM" id="SSF48173">
    <property type="entry name" value="Cryptochrome/photolyase FAD-binding domain"/>
    <property type="match status" value="1"/>
</dbReference>
<dbReference type="SUPFAM" id="SSF52425">
    <property type="entry name" value="Cryptochrome/photolyase, N-terminal domain"/>
    <property type="match status" value="1"/>
</dbReference>
<dbReference type="PROSITE" id="PS51645">
    <property type="entry name" value="PHR_CRY_ALPHA_BETA"/>
    <property type="match status" value="1"/>
</dbReference>
<name>CRY2_MOUSE</name>
<feature type="chain" id="PRO_0000261149" description="Cryptochrome-2">
    <location>
        <begin position="1"/>
        <end position="592"/>
    </location>
</feature>
<feature type="domain" description="Photolyase/cryptochrome alpha/beta">
    <location>
        <begin position="21"/>
        <end position="150"/>
    </location>
</feature>
<feature type="region of interest" description="Required for inhibition of CLOCK-BMAL1-mediated transcription" evidence="2">
    <location>
        <begin position="389"/>
        <end position="488"/>
    </location>
</feature>
<feature type="region of interest" description="Disordered" evidence="4">
    <location>
        <begin position="532"/>
        <end position="592"/>
    </location>
</feature>
<feature type="compositionally biased region" description="Polar residues" evidence="4">
    <location>
        <begin position="536"/>
        <end position="547"/>
    </location>
</feature>
<feature type="compositionally biased region" description="Polar residues" evidence="4">
    <location>
        <begin position="582"/>
        <end position="592"/>
    </location>
</feature>
<feature type="binding site" evidence="26">
    <location>
        <position position="270"/>
    </location>
    <ligand>
        <name>FAD</name>
        <dbReference type="ChEBI" id="CHEBI:57692"/>
    </ligand>
</feature>
<feature type="binding site" evidence="2">
    <location>
        <position position="307"/>
    </location>
    <ligand>
        <name>FAD</name>
        <dbReference type="ChEBI" id="CHEBI:57692"/>
    </ligand>
</feature>
<feature type="binding site" evidence="26">
    <location>
        <position position="373"/>
    </location>
    <ligand>
        <name>FAD</name>
        <dbReference type="ChEBI" id="CHEBI:57692"/>
    </ligand>
</feature>
<feature type="binding site" evidence="26">
    <location>
        <begin position="405"/>
        <end position="407"/>
    </location>
    <ligand>
        <name>FAD</name>
        <dbReference type="ChEBI" id="CHEBI:57692"/>
    </ligand>
</feature>
<feature type="modified residue" description="Phosphoserine" evidence="2">
    <location>
        <position position="89"/>
    </location>
</feature>
<feature type="modified residue" description="Phosphoserine; by MAPK" evidence="8 10">
    <location>
        <position position="265"/>
    </location>
</feature>
<feature type="modified residue" description="Phosphoserine" evidence="2">
    <location>
        <position position="298"/>
    </location>
</feature>
<feature type="modified residue" description="Phosphoserine; by GSK3-beta" evidence="8 19">
    <location>
        <position position="553"/>
    </location>
</feature>
<feature type="modified residue" description="Phosphoserine; by DYRK1A and MAPK" evidence="8 10 11 19">
    <location>
        <position position="557"/>
    </location>
</feature>
<feature type="cross-link" description="Glycyl lysine isopeptide (Lys-Gly) (interchain with G-Cter in ubiquitin)" evidence="2">
    <location>
        <position position="29"/>
    </location>
</feature>
<feature type="cross-link" description="Glycyl lysine isopeptide (Lys-Gly) (interchain with G-Cter in ubiquitin)" evidence="25">
    <location>
        <position position="125"/>
    </location>
</feature>
<feature type="cross-link" description="Glycyl lysine isopeptide (Lys-Gly) (interchain with G-Cter in ubiquitin)" evidence="25">
    <location>
        <position position="241"/>
    </location>
</feature>
<feature type="cross-link" description="Glycyl lysine isopeptide (Lys-Gly) (interchain with G-Cter in ubiquitin)" evidence="25">
    <location>
        <position position="347"/>
    </location>
</feature>
<feature type="cross-link" description="Glycyl lysine isopeptide (Lys-Gly) (interchain with G-Cter in ubiquitin)" evidence="25">
    <location>
        <position position="474"/>
    </location>
</feature>
<feature type="cross-link" description="Glycyl lysine isopeptide (Lys-Gly) (interchain with G-Cter in ubiquitin)" evidence="25">
    <location>
        <position position="503"/>
    </location>
</feature>
<feature type="mutagenesis site" description="Reduced in vitro MAPK-catalyzed phosphorylation. No effect on inhibition of CLOCK-BMAL1-mediated transcriptional activity. Very little in vitro MAPK-catalyzed phosphorylation; when associated with A-557." evidence="10">
    <original>S</original>
    <variation>A</variation>
    <location>
        <position position="265"/>
    </location>
</feature>
<feature type="mutagenesis site" description="Reduced inhibition of CLOCK-BMAL1-mediated transcriptional activity. No effect on nuclear localization nor on protein stability." evidence="10">
    <original>S</original>
    <variation>D</variation>
    <location>
        <position position="265"/>
    </location>
</feature>
<feature type="mutagenesis site" description="Decreases FBXL3 binding. Strongly decreases CRY2 degradation." evidence="26">
    <original>W</original>
    <variation>A</variation>
    <location>
        <position position="310"/>
    </location>
</feature>
<feature type="mutagenesis site" description="Strongly reduces PER1 binding." evidence="26">
    <original>D</original>
    <variation>R</variation>
    <location>
        <position position="339"/>
    </location>
</feature>
<feature type="mutagenesis site" description="Loss of ability to inhibit CLOCK-BMAL1-mediated transcriptional activity. No loss of ability to inhibit NR1I2 transcriptional activity." evidence="37">
    <original>G</original>
    <variation>D</variation>
    <location>
        <position position="351"/>
    </location>
</feature>
<feature type="mutagenesis site" description="Loss of ability to inhibit CLOCK-BMAL1-mediated transcriptional activity. No loss of ability to inhibit NR1I2 transcriptional activity." evidence="37">
    <original>G</original>
    <variation>D</variation>
    <location>
        <position position="354"/>
    </location>
</feature>
<feature type="mutagenesis site" description="Impairs protein folding. Abolishes binding of BMAL1, PER1 and FBXL3. Strongly reduces SKP1 binding." evidence="26">
    <original>R</original>
    <variation>A</variation>
    <location>
        <position position="376"/>
    </location>
</feature>
<feature type="mutagenesis site" description="Reduced interaction with NR1I2 and NR1I3. Significant decrease in interaction with NR1I2 and NR1I3; when associated with M-396 and K-397." evidence="37">
    <original>S</original>
    <variation>E</variation>
    <location>
        <position position="394"/>
    </location>
</feature>
<feature type="mutagenesis site" description="Reduced interaction with NR1I2 and NR1I3. Significant decrease in interaction with NR1I2 and NR1I3; when associated with E-394 and K-397." evidence="37">
    <original>V</original>
    <variation>M</variation>
    <location>
        <position position="396"/>
    </location>
</feature>
<feature type="mutagenesis site" description="Reduced interaction with NR1I2 and NR1I3. Significant decrease in interaction with NR1I2 and NR1I3; when associated with E-394 and M-396." evidence="37">
    <original>R</original>
    <variation>K</variation>
    <location>
        <position position="397"/>
    </location>
</feature>
<feature type="mutagenesis site" description="Abolishes binding of FBXL3 and SKP1. Strongly decreases CRY2 degradation." evidence="26">
    <original>F</original>
    <variation>D</variation>
    <location>
        <position position="428"/>
    </location>
</feature>
<feature type="mutagenesis site" description="Abolishes binding of FBXL3 and SKP1. Strongly decreases CRY2 degradation." evidence="26">
    <original>I</original>
    <variation>D</variation>
    <location>
        <position position="499"/>
    </location>
</feature>
<feature type="mutagenesis site" description="Inhibits interaction with PER2. Does not suppress its nuclear localization. Inhibits its repression activity on CLOCK|NPAS2-BMAL1-driven transcription." evidence="20">
    <original>R</original>
    <variation>Q</variation>
    <location>
        <position position="501"/>
    </location>
</feature>
<feature type="mutagenesis site" description="Inhibits interaction with PER2. Does not suppress its nuclear localization. Inhibits its repression activity on CLOCK|NPAS2-BMAL1-driven transcription." evidence="20">
    <original>K</original>
    <variation>R</variation>
    <location>
        <position position="503"/>
    </location>
</feature>
<feature type="mutagenesis site" description="Decreases FBXL3 binding. Strongly decreases CRY2 degradation." evidence="26">
    <original>L</original>
    <variation>D</variation>
    <location>
        <position position="517"/>
    </location>
</feature>
<feature type="mutagenesis site" description="Shorter circadian rhythm; when associated with A-557." evidence="19">
    <original>S</original>
    <variation>A</variation>
    <location>
        <position position="553"/>
    </location>
</feature>
<feature type="mutagenesis site" description="Reduced in vitro MAPK-catalyzed phosphorylation. No effect on inhibition of CLOCK-BMAL1-mediated transcriptional activity. Very little in vitro MAPK-catalyzed phosphorylation; when associated with A-265. Shorter circadian rhythm; when associated with A-553." evidence="10 19">
    <original>S</original>
    <variation>A</variation>
    <location>
        <position position="557"/>
    </location>
</feature>
<feature type="mutagenesis site" description="Reduced inhibition of CLOCK-BMAL1-mediated transcriptional activity. No effect on nuclear localization nor on protein stability." evidence="10 19">
    <original>S</original>
    <variation>D</variation>
    <location>
        <position position="557"/>
    </location>
</feature>
<feature type="sequence conflict" description="In Ref. 5; BAA19864." evidence="40" ref="5">
    <original>QQ</original>
    <variation>SR</variation>
    <location>
        <begin position="191"/>
        <end position="192"/>
    </location>
</feature>
<feature type="sequence conflict" description="In Ref. 5; BAA19864." evidence="40" ref="5">
    <original>E</original>
    <variation>K</variation>
    <location>
        <position position="202"/>
    </location>
</feature>
<feature type="sequence conflict" description="In Ref. 5; BAA19864." evidence="40" ref="5">
    <original>M</original>
    <variation>V</variation>
    <location>
        <position position="327"/>
    </location>
</feature>
<feature type="strand" evidence="43">
    <location>
        <begin position="21"/>
        <end position="29"/>
    </location>
</feature>
<feature type="strand" evidence="43">
    <location>
        <begin position="32"/>
        <end position="35"/>
    </location>
</feature>
<feature type="helix" evidence="43">
    <location>
        <begin position="37"/>
        <end position="43"/>
    </location>
</feature>
<feature type="strand" evidence="43">
    <location>
        <begin position="46"/>
        <end position="55"/>
    </location>
</feature>
<feature type="helix" evidence="43">
    <location>
        <begin position="59"/>
        <end position="61"/>
    </location>
</feature>
<feature type="helix" evidence="43">
    <location>
        <begin position="67"/>
        <end position="85"/>
    </location>
</feature>
<feature type="turn" evidence="43">
    <location>
        <begin position="86"/>
        <end position="88"/>
    </location>
</feature>
<feature type="strand" evidence="43">
    <location>
        <begin position="91"/>
        <end position="96"/>
    </location>
</feature>
<feature type="helix" evidence="43">
    <location>
        <begin position="98"/>
        <end position="109"/>
    </location>
</feature>
<feature type="strand" evidence="43">
    <location>
        <begin position="113"/>
        <end position="117"/>
    </location>
</feature>
<feature type="helix" evidence="43">
    <location>
        <begin position="122"/>
        <end position="137"/>
    </location>
</feature>
<feature type="strand" evidence="43">
    <location>
        <begin position="141"/>
        <end position="145"/>
    </location>
</feature>
<feature type="strand" evidence="43">
    <location>
        <begin position="149"/>
        <end position="151"/>
    </location>
</feature>
<feature type="helix" evidence="43">
    <location>
        <begin position="153"/>
        <end position="159"/>
    </location>
</feature>
<feature type="turn" evidence="41">
    <location>
        <begin position="160"/>
        <end position="162"/>
    </location>
</feature>
<feature type="helix" evidence="43">
    <location>
        <begin position="168"/>
        <end position="176"/>
    </location>
</feature>
<feature type="helix" evidence="43">
    <location>
        <begin position="190"/>
        <end position="195"/>
    </location>
</feature>
<feature type="helix" evidence="43">
    <location>
        <begin position="204"/>
        <end position="206"/>
    </location>
</feature>
<feature type="helix" evidence="43">
    <location>
        <begin position="213"/>
        <end position="216"/>
    </location>
</feature>
<feature type="helix" evidence="43">
    <location>
        <begin position="232"/>
        <end position="242"/>
    </location>
</feature>
<feature type="helix" evidence="43">
    <location>
        <begin position="245"/>
        <end position="247"/>
    </location>
</feature>
<feature type="helix" evidence="43">
    <location>
        <begin position="248"/>
        <end position="251"/>
    </location>
</feature>
<feature type="helix" evidence="43">
    <location>
        <begin position="260"/>
        <end position="262"/>
    </location>
</feature>
<feature type="helix" evidence="43">
    <location>
        <begin position="270"/>
        <end position="274"/>
    </location>
</feature>
<feature type="helix" evidence="43">
    <location>
        <begin position="280"/>
        <end position="295"/>
    </location>
</feature>
<feature type="helix" evidence="43">
    <location>
        <begin position="302"/>
        <end position="305"/>
    </location>
</feature>
<feature type="helix" evidence="43">
    <location>
        <begin position="306"/>
        <end position="318"/>
    </location>
</feature>
<feature type="turn" evidence="43">
    <location>
        <begin position="322"/>
        <end position="325"/>
    </location>
</feature>
<feature type="helix" evidence="43">
    <location>
        <begin position="342"/>
        <end position="350"/>
    </location>
</feature>
<feature type="helix" evidence="43">
    <location>
        <begin position="356"/>
        <end position="368"/>
    </location>
</feature>
<feature type="helix" evidence="43">
    <location>
        <begin position="373"/>
        <end position="383"/>
    </location>
</feature>
<feature type="turn" evidence="43">
    <location>
        <begin position="384"/>
        <end position="388"/>
    </location>
</feature>
<feature type="helix" evidence="43">
    <location>
        <begin position="392"/>
        <end position="402"/>
    </location>
</feature>
<feature type="helix" evidence="43">
    <location>
        <begin position="408"/>
        <end position="418"/>
    </location>
</feature>
<feature type="strand" evidence="43">
    <location>
        <begin position="421"/>
        <end position="423"/>
    </location>
</feature>
<feature type="helix" evidence="43">
    <location>
        <begin position="435"/>
        <end position="440"/>
    </location>
</feature>
<feature type="helix" evidence="43">
    <location>
        <begin position="445"/>
        <end position="450"/>
    </location>
</feature>
<feature type="helix" evidence="43">
    <location>
        <begin position="452"/>
        <end position="454"/>
    </location>
</feature>
<feature type="turn" evidence="43">
    <location>
        <begin position="459"/>
        <end position="463"/>
    </location>
</feature>
<feature type="helix" evidence="43">
    <location>
        <begin position="465"/>
        <end position="467"/>
    </location>
</feature>
<feature type="helix" evidence="43">
    <location>
        <begin position="470"/>
        <end position="475"/>
    </location>
</feature>
<feature type="turn" evidence="43">
    <location>
        <begin position="480"/>
        <end position="482"/>
    </location>
</feature>
<feature type="helix" evidence="43">
    <location>
        <begin position="491"/>
        <end position="507"/>
    </location>
</feature>
<feature type="strand" evidence="42">
    <location>
        <begin position="517"/>
        <end position="521"/>
    </location>
</feature>